<name>LRRC3_DANRE</name>
<evidence type="ECO:0000255" key="1"/>
<evidence type="ECO:0000305" key="2"/>
<protein>
    <recommendedName>
        <fullName>Leucine-rich repeat-containing protein 3</fullName>
    </recommendedName>
</protein>
<feature type="signal peptide" evidence="1">
    <location>
        <begin position="1"/>
        <end position="38"/>
    </location>
</feature>
<feature type="chain" id="PRO_0000345964" description="Leucine-rich repeat-containing protein 3">
    <location>
        <begin position="39"/>
        <end position="266"/>
    </location>
</feature>
<feature type="transmembrane region" description="Helical" evidence="1">
    <location>
        <begin position="211"/>
        <end position="231"/>
    </location>
</feature>
<feature type="domain" description="LRRNT">
    <location>
        <begin position="39"/>
        <end position="70"/>
    </location>
</feature>
<feature type="repeat" description="LRR 1">
    <location>
        <begin position="71"/>
        <end position="92"/>
    </location>
</feature>
<feature type="repeat" description="LRR 2">
    <location>
        <begin position="95"/>
        <end position="116"/>
    </location>
</feature>
<feature type="repeat" description="LRR 3">
    <location>
        <begin position="120"/>
        <end position="141"/>
    </location>
</feature>
<feature type="domain" description="LRRCT">
    <location>
        <begin position="151"/>
        <end position="204"/>
    </location>
</feature>
<sequence>MTFPAGAYVLRKVFIPHGCPLIFRLLLAVICLSVPSFACPKSCHCSERNSLTVVQCSSRNLEEIPPDLPHDTVSLQLSSNHITKIPNQAFKNLPWLQELDLSRNAIETVDAGAFKGVSESLRTLDLSHNHMQGVPKEAFARLHAKISLSNNPWHCECTLQEVLRELRLDPETVNEVSCHTSDQEKYAGKPVIQVLDSGINFCNFHHKTTDVAMFVTMFGWFTMVIAYVIYYVRHNQEDARRHLEYLKSLPSSSQISKDFDTISTVL</sequence>
<organism>
    <name type="scientific">Danio rerio</name>
    <name type="common">Zebrafish</name>
    <name type="synonym">Brachydanio rerio</name>
    <dbReference type="NCBI Taxonomy" id="7955"/>
    <lineage>
        <taxon>Eukaryota</taxon>
        <taxon>Metazoa</taxon>
        <taxon>Chordata</taxon>
        <taxon>Craniata</taxon>
        <taxon>Vertebrata</taxon>
        <taxon>Euteleostomi</taxon>
        <taxon>Actinopterygii</taxon>
        <taxon>Neopterygii</taxon>
        <taxon>Teleostei</taxon>
        <taxon>Ostariophysi</taxon>
        <taxon>Cypriniformes</taxon>
        <taxon>Danionidae</taxon>
        <taxon>Danioninae</taxon>
        <taxon>Danio</taxon>
    </lineage>
</organism>
<proteinExistence type="evidence at transcript level"/>
<keyword id="KW-0433">Leucine-rich repeat</keyword>
<keyword id="KW-0472">Membrane</keyword>
<keyword id="KW-1185">Reference proteome</keyword>
<keyword id="KW-0677">Repeat</keyword>
<keyword id="KW-0732">Signal</keyword>
<keyword id="KW-0812">Transmembrane</keyword>
<keyword id="KW-1133">Transmembrane helix</keyword>
<comment type="subcellular location">
    <subcellularLocation>
        <location evidence="2">Membrane</location>
        <topology evidence="2">Single-pass membrane protein</topology>
    </subcellularLocation>
</comment>
<comment type="similarity">
    <text evidence="2">Belongs to the LRRC3 family.</text>
</comment>
<comment type="sequence caution" evidence="2">
    <conflict type="miscellaneous discrepancy">
        <sequence resource="EMBL-CDS" id="CAP07984"/>
    </conflict>
    <text>C-terminus of translation can be extended by 1 residue.</text>
</comment>
<dbReference type="EMBL" id="BX247868">
    <property type="protein sequence ID" value="CAP19488.1"/>
    <property type="molecule type" value="Genomic_DNA"/>
</dbReference>
<dbReference type="EMBL" id="CU468760">
    <property type="protein sequence ID" value="CAP07984.1"/>
    <property type="status" value="ALT_SEQ"/>
    <property type="molecule type" value="mRNA"/>
</dbReference>
<dbReference type="RefSeq" id="NP_001107114.1">
    <property type="nucleotide sequence ID" value="NM_001113642.1"/>
</dbReference>
<dbReference type="RefSeq" id="XP_009303150.1">
    <property type="nucleotide sequence ID" value="XM_009304875.4"/>
</dbReference>
<dbReference type="SMR" id="A8WHP9"/>
<dbReference type="FunCoup" id="A8WHP9">
    <property type="interactions" value="544"/>
</dbReference>
<dbReference type="STRING" id="7955.ENSDARP00000120615"/>
<dbReference type="PaxDb" id="7955-ENSDARP00000120615"/>
<dbReference type="Ensembl" id="ENSDART00000142888">
    <property type="protein sequence ID" value="ENSDARP00000120615"/>
    <property type="gene ID" value="ENSDARG00000078415"/>
</dbReference>
<dbReference type="GeneID" id="100001372"/>
<dbReference type="KEGG" id="dre:100001372"/>
<dbReference type="AGR" id="ZFIN:ZDB-GENE-080327-13"/>
<dbReference type="CTD" id="81543"/>
<dbReference type="ZFIN" id="ZDB-GENE-080327-13">
    <property type="gene designation" value="lrrc3"/>
</dbReference>
<dbReference type="eggNOG" id="KOG4237">
    <property type="taxonomic scope" value="Eukaryota"/>
</dbReference>
<dbReference type="HOGENOM" id="CLU_064640_0_0_1"/>
<dbReference type="InParanoid" id="A8WHP9"/>
<dbReference type="OMA" id="QCPDHAG"/>
<dbReference type="OrthoDB" id="6343311at2759"/>
<dbReference type="PhylomeDB" id="A8WHP9"/>
<dbReference type="TreeFam" id="TF327070"/>
<dbReference type="PRO" id="PR:A8WHP9"/>
<dbReference type="Proteomes" id="UP000000437">
    <property type="component" value="Chromosome 9"/>
</dbReference>
<dbReference type="Bgee" id="ENSDARG00000078415">
    <property type="expression patterns" value="Expressed in early embryo and 15 other cell types or tissues"/>
</dbReference>
<dbReference type="GO" id="GO:0031012">
    <property type="term" value="C:extracellular matrix"/>
    <property type="evidence" value="ECO:0000318"/>
    <property type="project" value="GO_Central"/>
</dbReference>
<dbReference type="GO" id="GO:0005615">
    <property type="term" value="C:extracellular space"/>
    <property type="evidence" value="ECO:0000318"/>
    <property type="project" value="GO_Central"/>
</dbReference>
<dbReference type="GO" id="GO:0016020">
    <property type="term" value="C:membrane"/>
    <property type="evidence" value="ECO:0007669"/>
    <property type="project" value="UniProtKB-SubCell"/>
</dbReference>
<dbReference type="FunFam" id="3.80.10.10:FF:000069">
    <property type="entry name" value="leucine-rich repeat-containing protein 3B"/>
    <property type="match status" value="1"/>
</dbReference>
<dbReference type="Gene3D" id="3.80.10.10">
    <property type="entry name" value="Ribonuclease Inhibitor"/>
    <property type="match status" value="1"/>
</dbReference>
<dbReference type="InterPro" id="IPR001611">
    <property type="entry name" value="Leu-rich_rpt"/>
</dbReference>
<dbReference type="InterPro" id="IPR003591">
    <property type="entry name" value="Leu-rich_rpt_typical-subtyp"/>
</dbReference>
<dbReference type="InterPro" id="IPR032675">
    <property type="entry name" value="LRR_dom_sf"/>
</dbReference>
<dbReference type="InterPro" id="IPR050541">
    <property type="entry name" value="LRR_TM_domain-containing"/>
</dbReference>
<dbReference type="InterPro" id="IPR000372">
    <property type="entry name" value="LRRNT"/>
</dbReference>
<dbReference type="PANTHER" id="PTHR24369">
    <property type="entry name" value="ANTIGEN BSP, PUTATIVE-RELATED"/>
    <property type="match status" value="1"/>
</dbReference>
<dbReference type="PANTHER" id="PTHR24369:SF170">
    <property type="entry name" value="LEUCINE-RICH REPEAT-CONTAINING PROTEIN 3"/>
    <property type="match status" value="1"/>
</dbReference>
<dbReference type="Pfam" id="PF13855">
    <property type="entry name" value="LRR_8"/>
    <property type="match status" value="1"/>
</dbReference>
<dbReference type="Pfam" id="PF01462">
    <property type="entry name" value="LRRNT"/>
    <property type="match status" value="1"/>
</dbReference>
<dbReference type="SMART" id="SM00369">
    <property type="entry name" value="LRR_TYP"/>
    <property type="match status" value="3"/>
</dbReference>
<dbReference type="SMART" id="SM00013">
    <property type="entry name" value="LRRNT"/>
    <property type="match status" value="1"/>
</dbReference>
<dbReference type="SUPFAM" id="SSF52058">
    <property type="entry name" value="L domain-like"/>
    <property type="match status" value="1"/>
</dbReference>
<dbReference type="PROSITE" id="PS51450">
    <property type="entry name" value="LRR"/>
    <property type="match status" value="3"/>
</dbReference>
<reference key="1">
    <citation type="journal article" date="2013" name="Nature">
        <title>The zebrafish reference genome sequence and its relationship to the human genome.</title>
        <authorList>
            <person name="Howe K."/>
            <person name="Clark M.D."/>
            <person name="Torroja C.F."/>
            <person name="Torrance J."/>
            <person name="Berthelot C."/>
            <person name="Muffato M."/>
            <person name="Collins J.E."/>
            <person name="Humphray S."/>
            <person name="McLaren K."/>
            <person name="Matthews L."/>
            <person name="McLaren S."/>
            <person name="Sealy I."/>
            <person name="Caccamo M."/>
            <person name="Churcher C."/>
            <person name="Scott C."/>
            <person name="Barrett J.C."/>
            <person name="Koch R."/>
            <person name="Rauch G.J."/>
            <person name="White S."/>
            <person name="Chow W."/>
            <person name="Kilian B."/>
            <person name="Quintais L.T."/>
            <person name="Guerra-Assuncao J.A."/>
            <person name="Zhou Y."/>
            <person name="Gu Y."/>
            <person name="Yen J."/>
            <person name="Vogel J.H."/>
            <person name="Eyre T."/>
            <person name="Redmond S."/>
            <person name="Banerjee R."/>
            <person name="Chi J."/>
            <person name="Fu B."/>
            <person name="Langley E."/>
            <person name="Maguire S.F."/>
            <person name="Laird G.K."/>
            <person name="Lloyd D."/>
            <person name="Kenyon E."/>
            <person name="Donaldson S."/>
            <person name="Sehra H."/>
            <person name="Almeida-King J."/>
            <person name="Loveland J."/>
            <person name="Trevanion S."/>
            <person name="Jones M."/>
            <person name="Quail M."/>
            <person name="Willey D."/>
            <person name="Hunt A."/>
            <person name="Burton J."/>
            <person name="Sims S."/>
            <person name="McLay K."/>
            <person name="Plumb B."/>
            <person name="Davis J."/>
            <person name="Clee C."/>
            <person name="Oliver K."/>
            <person name="Clark R."/>
            <person name="Riddle C."/>
            <person name="Elliot D."/>
            <person name="Threadgold G."/>
            <person name="Harden G."/>
            <person name="Ware D."/>
            <person name="Begum S."/>
            <person name="Mortimore B."/>
            <person name="Kerry G."/>
            <person name="Heath P."/>
            <person name="Phillimore B."/>
            <person name="Tracey A."/>
            <person name="Corby N."/>
            <person name="Dunn M."/>
            <person name="Johnson C."/>
            <person name="Wood J."/>
            <person name="Clark S."/>
            <person name="Pelan S."/>
            <person name="Griffiths G."/>
            <person name="Smith M."/>
            <person name="Glithero R."/>
            <person name="Howden P."/>
            <person name="Barker N."/>
            <person name="Lloyd C."/>
            <person name="Stevens C."/>
            <person name="Harley J."/>
            <person name="Holt K."/>
            <person name="Panagiotidis G."/>
            <person name="Lovell J."/>
            <person name="Beasley H."/>
            <person name="Henderson C."/>
            <person name="Gordon D."/>
            <person name="Auger K."/>
            <person name="Wright D."/>
            <person name="Collins J."/>
            <person name="Raisen C."/>
            <person name="Dyer L."/>
            <person name="Leung K."/>
            <person name="Robertson L."/>
            <person name="Ambridge K."/>
            <person name="Leongamornlert D."/>
            <person name="McGuire S."/>
            <person name="Gilderthorp R."/>
            <person name="Griffiths C."/>
            <person name="Manthravadi D."/>
            <person name="Nichol S."/>
            <person name="Barker G."/>
            <person name="Whitehead S."/>
            <person name="Kay M."/>
            <person name="Brown J."/>
            <person name="Murnane C."/>
            <person name="Gray E."/>
            <person name="Humphries M."/>
            <person name="Sycamore N."/>
            <person name="Barker D."/>
            <person name="Saunders D."/>
            <person name="Wallis J."/>
            <person name="Babbage A."/>
            <person name="Hammond S."/>
            <person name="Mashreghi-Mohammadi M."/>
            <person name="Barr L."/>
            <person name="Martin S."/>
            <person name="Wray P."/>
            <person name="Ellington A."/>
            <person name="Matthews N."/>
            <person name="Ellwood M."/>
            <person name="Woodmansey R."/>
            <person name="Clark G."/>
            <person name="Cooper J."/>
            <person name="Tromans A."/>
            <person name="Grafham D."/>
            <person name="Skuce C."/>
            <person name="Pandian R."/>
            <person name="Andrews R."/>
            <person name="Harrison E."/>
            <person name="Kimberley A."/>
            <person name="Garnett J."/>
            <person name="Fosker N."/>
            <person name="Hall R."/>
            <person name="Garner P."/>
            <person name="Kelly D."/>
            <person name="Bird C."/>
            <person name="Palmer S."/>
            <person name="Gehring I."/>
            <person name="Berger A."/>
            <person name="Dooley C.M."/>
            <person name="Ersan-Urun Z."/>
            <person name="Eser C."/>
            <person name="Geiger H."/>
            <person name="Geisler M."/>
            <person name="Karotki L."/>
            <person name="Kirn A."/>
            <person name="Konantz J."/>
            <person name="Konantz M."/>
            <person name="Oberlander M."/>
            <person name="Rudolph-Geiger S."/>
            <person name="Teucke M."/>
            <person name="Lanz C."/>
            <person name="Raddatz G."/>
            <person name="Osoegawa K."/>
            <person name="Zhu B."/>
            <person name="Rapp A."/>
            <person name="Widaa S."/>
            <person name="Langford C."/>
            <person name="Yang F."/>
            <person name="Schuster S.C."/>
            <person name="Carter N.P."/>
            <person name="Harrow J."/>
            <person name="Ning Z."/>
            <person name="Herrero J."/>
            <person name="Searle S.M."/>
            <person name="Enright A."/>
            <person name="Geisler R."/>
            <person name="Plasterk R.H."/>
            <person name="Lee C."/>
            <person name="Westerfield M."/>
            <person name="de Jong P.J."/>
            <person name="Zon L.I."/>
            <person name="Postlethwait J.H."/>
            <person name="Nusslein-Volhard C."/>
            <person name="Hubbard T.J."/>
            <person name="Roest Crollius H."/>
            <person name="Rogers J."/>
            <person name="Stemple D.L."/>
        </authorList>
    </citation>
    <scope>NUCLEOTIDE SEQUENCE [LARGE SCALE GENOMIC DNA]</scope>
    <source>
        <strain>Tuebingen</strain>
    </source>
</reference>
<reference key="2">
    <citation type="journal article" date="2008" name="Genome Res.">
        <title>Large-scale screening for novel low-affinity extracellular protein interactions.</title>
        <authorList>
            <person name="Bushell K.M."/>
            <person name="Soellner C."/>
            <person name="Schuster-Boeckler B."/>
            <person name="Bateman A."/>
            <person name="Wright G.J."/>
        </authorList>
    </citation>
    <scope>NUCLEOTIDE SEQUENCE [LARGE SCALE MRNA] OF 1-209</scope>
</reference>
<accession>A8WHP9</accession>
<accession>A8BB12</accession>
<gene>
    <name type="primary">lrrc3</name>
    <name type="ORF">sc:d0333</name>
    <name type="ORF">si:dkey-253a1.3</name>
</gene>